<name>CLPX_PARDP</name>
<protein>
    <recommendedName>
        <fullName evidence="1">ATP-dependent Clp protease ATP-binding subunit ClpX</fullName>
    </recommendedName>
</protein>
<sequence>MANPTGGDSKNTLYCSFCGKSQHEVRKLIAGPTVFICDECVELCMDIIREETKSSALKSGDGVPTPREICNVLDDYVIGQEHAKRVLSVAVHNHYKRLNHSSKTDIELAKSNILLIGPTGCGKTLLAQTLARILDVPFTMADATTLTEAGYVGEDVENIILKLLQASEYNVERAQRGIVYIDEVDKITRKSDNPSITRDVSGEGVQQALLKIMEGTVASVPPQGGRKHPQQEFLQVDTTNILFICGGAFAGLDRIIAQRNKGTAMGFGAAVKEDDDKGVGELFKQLEPEDLLKFGLIPEFVGRLPVIATLGDLDEQALITILTQPKNALVKQYQRLFDLESVKLTFTEDALTAIAKRAIKRKTGARGLRSIMEDILLDTMFDLPGMDSVEEVVVNEEAVDNPTAKPLLIHTDSKKETASAG</sequence>
<evidence type="ECO:0000255" key="1">
    <source>
        <dbReference type="HAMAP-Rule" id="MF_00175"/>
    </source>
</evidence>
<evidence type="ECO:0000255" key="2">
    <source>
        <dbReference type="PROSITE-ProRule" id="PRU01250"/>
    </source>
</evidence>
<feature type="chain" id="PRO_1000024605" description="ATP-dependent Clp protease ATP-binding subunit ClpX">
    <location>
        <begin position="1"/>
        <end position="421"/>
    </location>
</feature>
<feature type="domain" description="ClpX-type ZB" evidence="2">
    <location>
        <begin position="3"/>
        <end position="56"/>
    </location>
</feature>
<feature type="binding site" evidence="2">
    <location>
        <position position="15"/>
    </location>
    <ligand>
        <name>Zn(2+)</name>
        <dbReference type="ChEBI" id="CHEBI:29105"/>
    </ligand>
</feature>
<feature type="binding site" evidence="2">
    <location>
        <position position="18"/>
    </location>
    <ligand>
        <name>Zn(2+)</name>
        <dbReference type="ChEBI" id="CHEBI:29105"/>
    </ligand>
</feature>
<feature type="binding site" evidence="2">
    <location>
        <position position="37"/>
    </location>
    <ligand>
        <name>Zn(2+)</name>
        <dbReference type="ChEBI" id="CHEBI:29105"/>
    </ligand>
</feature>
<feature type="binding site" evidence="2">
    <location>
        <position position="40"/>
    </location>
    <ligand>
        <name>Zn(2+)</name>
        <dbReference type="ChEBI" id="CHEBI:29105"/>
    </ligand>
</feature>
<feature type="binding site" evidence="1">
    <location>
        <begin position="118"/>
        <end position="125"/>
    </location>
    <ligand>
        <name>ATP</name>
        <dbReference type="ChEBI" id="CHEBI:30616"/>
    </ligand>
</feature>
<organism>
    <name type="scientific">Paracoccus denitrificans (strain Pd 1222)</name>
    <dbReference type="NCBI Taxonomy" id="318586"/>
    <lineage>
        <taxon>Bacteria</taxon>
        <taxon>Pseudomonadati</taxon>
        <taxon>Pseudomonadota</taxon>
        <taxon>Alphaproteobacteria</taxon>
        <taxon>Rhodobacterales</taxon>
        <taxon>Paracoccaceae</taxon>
        <taxon>Paracoccus</taxon>
    </lineage>
</organism>
<keyword id="KW-0067">ATP-binding</keyword>
<keyword id="KW-0143">Chaperone</keyword>
<keyword id="KW-0479">Metal-binding</keyword>
<keyword id="KW-0547">Nucleotide-binding</keyword>
<keyword id="KW-1185">Reference proteome</keyword>
<keyword id="KW-0862">Zinc</keyword>
<accession>A1B1H7</accession>
<proteinExistence type="inferred from homology"/>
<gene>
    <name evidence="1" type="primary">clpX</name>
    <name type="ordered locus">Pden_1266</name>
</gene>
<comment type="function">
    <text evidence="1">ATP-dependent specificity component of the Clp protease. It directs the protease to specific substrates. Can perform chaperone functions in the absence of ClpP.</text>
</comment>
<comment type="subunit">
    <text evidence="1">Component of the ClpX-ClpP complex. Forms a hexameric ring that, in the presence of ATP, binds to fourteen ClpP subunits assembled into a disk-like structure with a central cavity, resembling the structure of eukaryotic proteasomes.</text>
</comment>
<comment type="similarity">
    <text evidence="1">Belongs to the ClpX chaperone family.</text>
</comment>
<reference key="1">
    <citation type="submission" date="2006-12" db="EMBL/GenBank/DDBJ databases">
        <title>Complete sequence of chromosome 1 of Paracoccus denitrificans PD1222.</title>
        <authorList>
            <person name="Copeland A."/>
            <person name="Lucas S."/>
            <person name="Lapidus A."/>
            <person name="Barry K."/>
            <person name="Detter J.C."/>
            <person name="Glavina del Rio T."/>
            <person name="Hammon N."/>
            <person name="Israni S."/>
            <person name="Dalin E."/>
            <person name="Tice H."/>
            <person name="Pitluck S."/>
            <person name="Munk A.C."/>
            <person name="Brettin T."/>
            <person name="Bruce D."/>
            <person name="Han C."/>
            <person name="Tapia R."/>
            <person name="Gilna P."/>
            <person name="Schmutz J."/>
            <person name="Larimer F."/>
            <person name="Land M."/>
            <person name="Hauser L."/>
            <person name="Kyrpides N."/>
            <person name="Lykidis A."/>
            <person name="Spiro S."/>
            <person name="Richardson D.J."/>
            <person name="Moir J.W.B."/>
            <person name="Ferguson S.J."/>
            <person name="van Spanning R.J.M."/>
            <person name="Richardson P."/>
        </authorList>
    </citation>
    <scope>NUCLEOTIDE SEQUENCE [LARGE SCALE GENOMIC DNA]</scope>
    <source>
        <strain>Pd 1222</strain>
    </source>
</reference>
<dbReference type="EMBL" id="CP000489">
    <property type="protein sequence ID" value="ABL69371.1"/>
    <property type="molecule type" value="Genomic_DNA"/>
</dbReference>
<dbReference type="RefSeq" id="WP_011747589.1">
    <property type="nucleotide sequence ID" value="NC_008686.1"/>
</dbReference>
<dbReference type="SMR" id="A1B1H7"/>
<dbReference type="STRING" id="318586.Pden_1266"/>
<dbReference type="EnsemblBacteria" id="ABL69371">
    <property type="protein sequence ID" value="ABL69371"/>
    <property type="gene ID" value="Pden_1266"/>
</dbReference>
<dbReference type="GeneID" id="93452479"/>
<dbReference type="KEGG" id="pde:Pden_1266"/>
<dbReference type="eggNOG" id="COG1219">
    <property type="taxonomic scope" value="Bacteria"/>
</dbReference>
<dbReference type="HOGENOM" id="CLU_014218_8_2_5"/>
<dbReference type="OrthoDB" id="9804062at2"/>
<dbReference type="Proteomes" id="UP000000361">
    <property type="component" value="Chromosome 1"/>
</dbReference>
<dbReference type="GO" id="GO:0009376">
    <property type="term" value="C:HslUV protease complex"/>
    <property type="evidence" value="ECO:0007669"/>
    <property type="project" value="TreeGrafter"/>
</dbReference>
<dbReference type="GO" id="GO:0005524">
    <property type="term" value="F:ATP binding"/>
    <property type="evidence" value="ECO:0007669"/>
    <property type="project" value="UniProtKB-UniRule"/>
</dbReference>
<dbReference type="GO" id="GO:0016887">
    <property type="term" value="F:ATP hydrolysis activity"/>
    <property type="evidence" value="ECO:0007669"/>
    <property type="project" value="InterPro"/>
</dbReference>
<dbReference type="GO" id="GO:0140662">
    <property type="term" value="F:ATP-dependent protein folding chaperone"/>
    <property type="evidence" value="ECO:0007669"/>
    <property type="project" value="InterPro"/>
</dbReference>
<dbReference type="GO" id="GO:0046983">
    <property type="term" value="F:protein dimerization activity"/>
    <property type="evidence" value="ECO:0007669"/>
    <property type="project" value="InterPro"/>
</dbReference>
<dbReference type="GO" id="GO:0051082">
    <property type="term" value="F:unfolded protein binding"/>
    <property type="evidence" value="ECO:0007669"/>
    <property type="project" value="UniProtKB-UniRule"/>
</dbReference>
<dbReference type="GO" id="GO:0008270">
    <property type="term" value="F:zinc ion binding"/>
    <property type="evidence" value="ECO:0007669"/>
    <property type="project" value="InterPro"/>
</dbReference>
<dbReference type="GO" id="GO:0051301">
    <property type="term" value="P:cell division"/>
    <property type="evidence" value="ECO:0007669"/>
    <property type="project" value="TreeGrafter"/>
</dbReference>
<dbReference type="GO" id="GO:0051603">
    <property type="term" value="P:proteolysis involved in protein catabolic process"/>
    <property type="evidence" value="ECO:0007669"/>
    <property type="project" value="TreeGrafter"/>
</dbReference>
<dbReference type="CDD" id="cd19497">
    <property type="entry name" value="RecA-like_ClpX"/>
    <property type="match status" value="1"/>
</dbReference>
<dbReference type="FunFam" id="1.10.8.60:FF:000002">
    <property type="entry name" value="ATP-dependent Clp protease ATP-binding subunit ClpX"/>
    <property type="match status" value="1"/>
</dbReference>
<dbReference type="FunFam" id="3.40.50.300:FF:000005">
    <property type="entry name" value="ATP-dependent Clp protease ATP-binding subunit ClpX"/>
    <property type="match status" value="1"/>
</dbReference>
<dbReference type="Gene3D" id="1.10.8.60">
    <property type="match status" value="1"/>
</dbReference>
<dbReference type="Gene3D" id="6.20.220.10">
    <property type="entry name" value="ClpX chaperone, C4-type zinc finger domain"/>
    <property type="match status" value="1"/>
</dbReference>
<dbReference type="Gene3D" id="3.40.50.300">
    <property type="entry name" value="P-loop containing nucleotide triphosphate hydrolases"/>
    <property type="match status" value="1"/>
</dbReference>
<dbReference type="HAMAP" id="MF_00175">
    <property type="entry name" value="ClpX"/>
    <property type="match status" value="1"/>
</dbReference>
<dbReference type="InterPro" id="IPR003593">
    <property type="entry name" value="AAA+_ATPase"/>
</dbReference>
<dbReference type="InterPro" id="IPR050052">
    <property type="entry name" value="ATP-dep_Clp_protease_ClpX"/>
</dbReference>
<dbReference type="InterPro" id="IPR003959">
    <property type="entry name" value="ATPase_AAA_core"/>
</dbReference>
<dbReference type="InterPro" id="IPR019489">
    <property type="entry name" value="Clp_ATPase_C"/>
</dbReference>
<dbReference type="InterPro" id="IPR004487">
    <property type="entry name" value="Clp_protease_ATP-bd_su_ClpX"/>
</dbReference>
<dbReference type="InterPro" id="IPR046425">
    <property type="entry name" value="ClpX_bact"/>
</dbReference>
<dbReference type="InterPro" id="IPR027417">
    <property type="entry name" value="P-loop_NTPase"/>
</dbReference>
<dbReference type="InterPro" id="IPR010603">
    <property type="entry name" value="Znf_CppX_C4"/>
</dbReference>
<dbReference type="InterPro" id="IPR038366">
    <property type="entry name" value="Znf_CppX_C4_sf"/>
</dbReference>
<dbReference type="NCBIfam" id="TIGR00382">
    <property type="entry name" value="clpX"/>
    <property type="match status" value="1"/>
</dbReference>
<dbReference type="NCBIfam" id="NF003745">
    <property type="entry name" value="PRK05342.1"/>
    <property type="match status" value="1"/>
</dbReference>
<dbReference type="PANTHER" id="PTHR48102:SF7">
    <property type="entry name" value="ATP-DEPENDENT CLP PROTEASE ATP-BINDING SUBUNIT CLPX-LIKE, MITOCHONDRIAL"/>
    <property type="match status" value="1"/>
</dbReference>
<dbReference type="PANTHER" id="PTHR48102">
    <property type="entry name" value="ATP-DEPENDENT CLP PROTEASE ATP-BINDING SUBUNIT CLPX-LIKE, MITOCHONDRIAL-RELATED"/>
    <property type="match status" value="1"/>
</dbReference>
<dbReference type="Pfam" id="PF07724">
    <property type="entry name" value="AAA_2"/>
    <property type="match status" value="1"/>
</dbReference>
<dbReference type="Pfam" id="PF10431">
    <property type="entry name" value="ClpB_D2-small"/>
    <property type="match status" value="1"/>
</dbReference>
<dbReference type="Pfam" id="PF06689">
    <property type="entry name" value="zf-C4_ClpX"/>
    <property type="match status" value="1"/>
</dbReference>
<dbReference type="SMART" id="SM00382">
    <property type="entry name" value="AAA"/>
    <property type="match status" value="1"/>
</dbReference>
<dbReference type="SMART" id="SM01086">
    <property type="entry name" value="ClpB_D2-small"/>
    <property type="match status" value="1"/>
</dbReference>
<dbReference type="SMART" id="SM00994">
    <property type="entry name" value="zf-C4_ClpX"/>
    <property type="match status" value="1"/>
</dbReference>
<dbReference type="SUPFAM" id="SSF57716">
    <property type="entry name" value="Glucocorticoid receptor-like (DNA-binding domain)"/>
    <property type="match status" value="1"/>
</dbReference>
<dbReference type="SUPFAM" id="SSF52540">
    <property type="entry name" value="P-loop containing nucleoside triphosphate hydrolases"/>
    <property type="match status" value="1"/>
</dbReference>
<dbReference type="PROSITE" id="PS51902">
    <property type="entry name" value="CLPX_ZB"/>
    <property type="match status" value="1"/>
</dbReference>